<comment type="function">
    <text evidence="2 3">The insulin-like growth factors possess growth-promoting activity (By similarity). Major fetal growth hormone in mammals. Plays a key role in regulating fetoplacental development. IGF2 is influenced by placental lactogen. Also involved in tissue differentiation. In adults, involved in glucose metabolism in adipose tissue, skeletal muscle and liver. Acts as a ligand for integrin which is required for IGF2 signaling. Positively regulates myogenic transcription factor MYOD1 function by facilitating the recruitment of transcriptional coactivators, thereby controlling muscle terminal differentiation (By similarity). Inhibits myoblast differentiation and modulates metabolism via increasing the mitochondrial respiration rate (By similarity).</text>
</comment>
<comment type="function">
    <text evidence="2 3">Preptin undergoes glucose-mediated co-secretion with insulin, and acts as a physiological amplifier of glucose-mediated insulin secretion. Exhibits osteogenic properties by increasing osteoblast mitogenic activity through phosphoactivation of MAPK1 and MAPK3.</text>
</comment>
<comment type="subunit">
    <text evidence="2 3">Interacts with MYORG; this interaction is required for IGF2 secretion. Interacts with integrins ITGAV:ITGB3 and ITGA6:ITGB4; integrin-binding is required for IGF2 signaling. Interacts with IGFBP2.</text>
</comment>
<comment type="subcellular location">
    <subcellularLocation>
        <location evidence="2 3">Secreted</location>
    </subcellularLocation>
</comment>
<comment type="PTM">
    <text evidence="2">Proteolytically processed by PCSK4, proIGF2 is cleaved at Arg-128 and Arg-92 to generate big-IGF2 and mature IGF2.</text>
</comment>
<comment type="miscellaneous">
    <text evidence="3">The IGF2 locus is imprinted. Paternal inherited gene is expressed, while the maternal inherited gene is imprinted, hence silenced.</text>
</comment>
<comment type="similarity">
    <text evidence="8">Belongs to the insulin family.</text>
</comment>
<comment type="sequence caution" evidence="8">
    <conflict type="erroneous initiation">
        <sequence resource="EMBL-CDS" id="CAA25427"/>
    </conflict>
    <text>Extended N-terminus.</text>
</comment>
<comment type="sequence caution" evidence="8">
    <conflict type="erroneous initiation">
        <sequence resource="EMBL-CDS" id="CAA25429"/>
    </conflict>
    <text>Truncated N-terminus.</text>
</comment>
<feature type="signal peptide" evidence="5">
    <location>
        <begin position="1"/>
        <end position="24"/>
    </location>
</feature>
<feature type="chain" id="PRO_0000015729" description="Insulin-like growth factor 2">
    <location>
        <begin position="25"/>
        <end position="91"/>
    </location>
</feature>
<feature type="propeptide" id="PRO_0000015730" description="E peptide">
    <location>
        <begin position="92"/>
        <end position="180"/>
    </location>
</feature>
<feature type="peptide" id="PRO_0000370380" description="Preptin">
    <location>
        <begin position="93"/>
        <end position="126"/>
    </location>
</feature>
<feature type="region of interest" description="B">
    <location>
        <begin position="25"/>
        <end position="52"/>
    </location>
</feature>
<feature type="region of interest" description="C">
    <location>
        <begin position="53"/>
        <end position="64"/>
    </location>
</feature>
<feature type="region of interest" description="A">
    <location>
        <begin position="65"/>
        <end position="85"/>
    </location>
</feature>
<feature type="region of interest" description="D">
    <location>
        <begin position="86"/>
        <end position="91"/>
    </location>
</feature>
<feature type="region of interest" description="Disordered" evidence="4">
    <location>
        <begin position="160"/>
        <end position="180"/>
    </location>
</feature>
<feature type="site" description="Important for interaction with integrin" evidence="2">
    <location>
        <position position="48"/>
    </location>
</feature>
<feature type="site" description="Important for interaction with integrin" evidence="2">
    <location>
        <position position="58"/>
    </location>
</feature>
<feature type="site" description="Important for interaction with integrin" evidence="2">
    <location>
        <position position="61"/>
    </location>
</feature>
<feature type="site" description="Important for interaction with integrin" evidence="2">
    <location>
        <position position="62"/>
    </location>
</feature>
<feature type="disulfide bond" evidence="1">
    <location>
        <begin position="33"/>
        <end position="71"/>
    </location>
</feature>
<feature type="disulfide bond" evidence="1">
    <location>
        <begin position="45"/>
        <end position="84"/>
    </location>
</feature>
<feature type="disulfide bond" evidence="1">
    <location>
        <begin position="70"/>
        <end position="75"/>
    </location>
</feature>
<feature type="sequence conflict" description="In Ref. 2." evidence="8" ref="2">
    <location>
        <begin position="1"/>
        <end position="8"/>
    </location>
</feature>
<feature type="sequence conflict" description="In Ref. 3." evidence="8" ref="3">
    <original>S</original>
    <variation>G</variation>
    <location>
        <position position="57"/>
    </location>
</feature>
<evidence type="ECO:0000250" key="1"/>
<evidence type="ECO:0000250" key="2">
    <source>
        <dbReference type="UniProtKB" id="P01344"/>
    </source>
</evidence>
<evidence type="ECO:0000250" key="3">
    <source>
        <dbReference type="UniProtKB" id="P09535"/>
    </source>
</evidence>
<evidence type="ECO:0000256" key="4">
    <source>
        <dbReference type="SAM" id="MobiDB-lite"/>
    </source>
</evidence>
<evidence type="ECO:0000269" key="5">
    <source>
    </source>
</evidence>
<evidence type="ECO:0000303" key="6">
    <source>
    </source>
</evidence>
<evidence type="ECO:0000303" key="7">
    <source>
    </source>
</evidence>
<evidence type="ECO:0000305" key="8"/>
<protein>
    <recommendedName>
        <fullName evidence="2">Insulin-like growth factor 2</fullName>
    </recommendedName>
    <alternativeName>
        <fullName evidence="6">Insulin-like growth factor II</fullName>
        <shortName evidence="6">IGF-II</shortName>
    </alternativeName>
    <alternativeName>
        <fullName evidence="7">Multiplication-stimulating activity</fullName>
        <shortName evidence="7">MSA</shortName>
    </alternativeName>
    <alternativeName>
        <fullName evidence="7">Multiplication-stimulating polypeptide</fullName>
    </alternativeName>
    <component>
        <recommendedName>
            <fullName evidence="2">Preptin</fullName>
        </recommendedName>
    </component>
</protein>
<proteinExistence type="evidence at protein level"/>
<keyword id="KW-0119">Carbohydrate metabolism</keyword>
<keyword id="KW-0165">Cleavage on pair of basic residues</keyword>
<keyword id="KW-0903">Direct protein sequencing</keyword>
<keyword id="KW-1015">Disulfide bond</keyword>
<keyword id="KW-0313">Glucose metabolism</keyword>
<keyword id="KW-0339">Growth factor</keyword>
<keyword id="KW-0372">Hormone</keyword>
<keyword id="KW-0497">Mitogen</keyword>
<keyword id="KW-0892">Osteogenesis</keyword>
<keyword id="KW-1185">Reference proteome</keyword>
<keyword id="KW-0964">Secreted</keyword>
<keyword id="KW-0732">Signal</keyword>
<name>IGF2_RAT</name>
<dbReference type="EMBL" id="X00911">
    <property type="protein sequence ID" value="CAA25428.1"/>
    <property type="molecule type" value="mRNA"/>
</dbReference>
<dbReference type="EMBL" id="X00911">
    <property type="protein sequence ID" value="CAA25427.1"/>
    <property type="status" value="ALT_INIT"/>
    <property type="molecule type" value="mRNA"/>
</dbReference>
<dbReference type="EMBL" id="X00911">
    <property type="protein sequence ID" value="CAA25429.1"/>
    <property type="status" value="ALT_INIT"/>
    <property type="molecule type" value="mRNA"/>
</dbReference>
<dbReference type="EMBL" id="X02213">
    <property type="protein sequence ID" value="CAA26136.1"/>
    <property type="molecule type" value="mRNA"/>
</dbReference>
<dbReference type="EMBL" id="X13101">
    <property type="protein sequence ID" value="CAA31493.1"/>
    <property type="molecule type" value="mRNA"/>
</dbReference>
<dbReference type="EMBL" id="X14833">
    <property type="protein sequence ID" value="CAA32942.1"/>
    <property type="molecule type" value="mRNA"/>
</dbReference>
<dbReference type="EMBL" id="X14834">
    <property type="protein sequence ID" value="CAA32943.1"/>
    <property type="molecule type" value="mRNA"/>
</dbReference>
<dbReference type="EMBL" id="M13871">
    <property type="protein sequence ID" value="AAB95624.1"/>
    <property type="molecule type" value="Genomic_DNA"/>
</dbReference>
<dbReference type="EMBL" id="M13869">
    <property type="protein sequence ID" value="AAB95624.1"/>
    <property type="status" value="JOINED"/>
    <property type="molecule type" value="Genomic_DNA"/>
</dbReference>
<dbReference type="EMBL" id="M13870">
    <property type="protein sequence ID" value="AAB95624.1"/>
    <property type="status" value="JOINED"/>
    <property type="molecule type" value="Genomic_DNA"/>
</dbReference>
<dbReference type="EMBL" id="M29880">
    <property type="protein sequence ID" value="AAA41391.1"/>
    <property type="molecule type" value="Genomic_DNA"/>
</dbReference>
<dbReference type="EMBL" id="M29879">
    <property type="protein sequence ID" value="AAA41391.1"/>
    <property type="status" value="JOINED"/>
    <property type="molecule type" value="Genomic_DNA"/>
</dbReference>
<dbReference type="EMBL" id="M30273">
    <property type="protein sequence ID" value="AAA41432.1"/>
    <property type="molecule type" value="mRNA"/>
</dbReference>
<dbReference type="EMBL" id="M31221">
    <property type="protein sequence ID" value="AAA42046.1"/>
    <property type="molecule type" value="Genomic_DNA"/>
</dbReference>
<dbReference type="PIR" id="A25350">
    <property type="entry name" value="IGRT2"/>
</dbReference>
<dbReference type="RefSeq" id="NP_001177091.1">
    <property type="nucleotide sequence ID" value="NM_001190162.1"/>
</dbReference>
<dbReference type="RefSeq" id="NP_001177092.1">
    <property type="nucleotide sequence ID" value="NM_001190163.1"/>
</dbReference>
<dbReference type="RefSeq" id="NP_113699.2">
    <property type="nucleotide sequence ID" value="NM_031511.2"/>
</dbReference>
<dbReference type="RefSeq" id="XP_006230727.1">
    <property type="nucleotide sequence ID" value="XM_006230665.2"/>
</dbReference>
<dbReference type="SMR" id="P01346"/>
<dbReference type="FunCoup" id="P01346">
    <property type="interactions" value="503"/>
</dbReference>
<dbReference type="IntAct" id="P01346">
    <property type="interactions" value="1"/>
</dbReference>
<dbReference type="STRING" id="10116.ENSRNOP00000068633"/>
<dbReference type="GlyGen" id="P01346">
    <property type="glycosylation" value="1 site"/>
</dbReference>
<dbReference type="PhosphoSitePlus" id="P01346"/>
<dbReference type="PaxDb" id="10116-ENSRNOP00000047037"/>
<dbReference type="ABCD" id="P01346">
    <property type="antibodies" value="1 sequenced antibody"/>
</dbReference>
<dbReference type="GeneID" id="24483"/>
<dbReference type="KEGG" id="rno:24483"/>
<dbReference type="UCSC" id="RGD:2870">
    <property type="organism name" value="rat"/>
</dbReference>
<dbReference type="AGR" id="RGD:2870"/>
<dbReference type="CTD" id="3481"/>
<dbReference type="RGD" id="2870">
    <property type="gene designation" value="Igf2"/>
</dbReference>
<dbReference type="eggNOG" id="ENOG502S0I0">
    <property type="taxonomic scope" value="Eukaryota"/>
</dbReference>
<dbReference type="InParanoid" id="P01346"/>
<dbReference type="PhylomeDB" id="P01346"/>
<dbReference type="TreeFam" id="TF332820"/>
<dbReference type="Reactome" id="R-RNO-114608">
    <property type="pathway name" value="Platelet degranulation"/>
</dbReference>
<dbReference type="Reactome" id="R-RNO-2404192">
    <property type="pathway name" value="Signaling by Type 1 Insulin-like Growth Factor 1 Receptor (IGF1R)"/>
</dbReference>
<dbReference type="Reactome" id="R-RNO-2428928">
    <property type="pathway name" value="IRS-related events triggered by IGF1R"/>
</dbReference>
<dbReference type="Reactome" id="R-RNO-2428933">
    <property type="pathway name" value="SHC-related events triggered by IGF1R"/>
</dbReference>
<dbReference type="Reactome" id="R-RNO-381426">
    <property type="pathway name" value="Regulation of Insulin-like Growth Factor (IGF) transport and uptake by Insulin-like Growth Factor Binding Proteins (IGFBPs)"/>
</dbReference>
<dbReference type="PRO" id="PR:P01346"/>
<dbReference type="Proteomes" id="UP000002494">
    <property type="component" value="Chromosome 1"/>
</dbReference>
<dbReference type="Bgee" id="ENSRNOG00000020369">
    <property type="expression patterns" value="Expressed in quadriceps femoris and 18 other cell types or tissues"/>
</dbReference>
<dbReference type="ExpressionAtlas" id="P01346">
    <property type="expression patterns" value="baseline and differential"/>
</dbReference>
<dbReference type="GO" id="GO:0005615">
    <property type="term" value="C:extracellular space"/>
    <property type="evidence" value="ECO:0000314"/>
    <property type="project" value="RGD"/>
</dbReference>
<dbReference type="GO" id="GO:0008083">
    <property type="term" value="F:growth factor activity"/>
    <property type="evidence" value="ECO:0000266"/>
    <property type="project" value="RGD"/>
</dbReference>
<dbReference type="GO" id="GO:0005179">
    <property type="term" value="F:hormone activity"/>
    <property type="evidence" value="ECO:0007669"/>
    <property type="project" value="UniProtKB-KW"/>
</dbReference>
<dbReference type="GO" id="GO:0005158">
    <property type="term" value="F:insulin receptor binding"/>
    <property type="evidence" value="ECO:0000266"/>
    <property type="project" value="RGD"/>
</dbReference>
<dbReference type="GO" id="GO:0005159">
    <property type="term" value="F:insulin-like growth factor receptor binding"/>
    <property type="evidence" value="ECO:0000266"/>
    <property type="project" value="RGD"/>
</dbReference>
<dbReference type="GO" id="GO:0005178">
    <property type="term" value="F:integrin binding"/>
    <property type="evidence" value="ECO:0000250"/>
    <property type="project" value="UniProtKB"/>
</dbReference>
<dbReference type="GO" id="GO:0043539">
    <property type="term" value="F:protein serine/threonine kinase activator activity"/>
    <property type="evidence" value="ECO:0000266"/>
    <property type="project" value="RGD"/>
</dbReference>
<dbReference type="GO" id="GO:0048018">
    <property type="term" value="F:receptor ligand activity"/>
    <property type="evidence" value="ECO:0000266"/>
    <property type="project" value="RGD"/>
</dbReference>
<dbReference type="GO" id="GO:0030297">
    <property type="term" value="F:transmembrane receptor protein tyrosine kinase activator activity"/>
    <property type="evidence" value="ECO:0000266"/>
    <property type="project" value="RGD"/>
</dbReference>
<dbReference type="GO" id="GO:0009887">
    <property type="term" value="P:animal organ morphogenesis"/>
    <property type="evidence" value="ECO:0000266"/>
    <property type="project" value="RGD"/>
</dbReference>
<dbReference type="GO" id="GO:0071260">
    <property type="term" value="P:cellular response to mechanical stimulus"/>
    <property type="evidence" value="ECO:0000270"/>
    <property type="project" value="RGD"/>
</dbReference>
<dbReference type="GO" id="GO:0001892">
    <property type="term" value="P:embryonic placenta development"/>
    <property type="evidence" value="ECO:0000250"/>
    <property type="project" value="UniProtKB"/>
</dbReference>
<dbReference type="GO" id="GO:0060669">
    <property type="term" value="P:embryonic placenta morphogenesis"/>
    <property type="evidence" value="ECO:0000266"/>
    <property type="project" value="RGD"/>
</dbReference>
<dbReference type="GO" id="GO:0031017">
    <property type="term" value="P:exocrine pancreas development"/>
    <property type="evidence" value="ECO:0000266"/>
    <property type="project" value="RGD"/>
</dbReference>
<dbReference type="GO" id="GO:0007565">
    <property type="term" value="P:female pregnancy"/>
    <property type="evidence" value="ECO:0000270"/>
    <property type="project" value="RGD"/>
</dbReference>
<dbReference type="GO" id="GO:0006006">
    <property type="term" value="P:glucose metabolic process"/>
    <property type="evidence" value="ECO:0007669"/>
    <property type="project" value="UniProtKB-KW"/>
</dbReference>
<dbReference type="GO" id="GO:0001701">
    <property type="term" value="P:in utero embryonic development"/>
    <property type="evidence" value="ECO:0000266"/>
    <property type="project" value="RGD"/>
</dbReference>
<dbReference type="GO" id="GO:0008286">
    <property type="term" value="P:insulin receptor signaling pathway"/>
    <property type="evidence" value="ECO:0000266"/>
    <property type="project" value="RGD"/>
</dbReference>
<dbReference type="GO" id="GO:0048009">
    <property type="term" value="P:insulin-like growth factor receptor signaling pathway"/>
    <property type="evidence" value="ECO:0000266"/>
    <property type="project" value="RGD"/>
</dbReference>
<dbReference type="GO" id="GO:0007613">
    <property type="term" value="P:memory"/>
    <property type="evidence" value="ECO:0000315"/>
    <property type="project" value="RGD"/>
</dbReference>
<dbReference type="GO" id="GO:0051148">
    <property type="term" value="P:negative regulation of muscle cell differentiation"/>
    <property type="evidence" value="ECO:0000250"/>
    <property type="project" value="UniProtKB"/>
</dbReference>
<dbReference type="GO" id="GO:0045953">
    <property type="term" value="P:negative regulation of natural killer cell mediated cytotoxicity"/>
    <property type="evidence" value="ECO:0000314"/>
    <property type="project" value="RGD"/>
</dbReference>
<dbReference type="GO" id="GO:0000122">
    <property type="term" value="P:negative regulation of transcription by RNA polymerase II"/>
    <property type="evidence" value="ECO:0000250"/>
    <property type="project" value="UniProtKB"/>
</dbReference>
<dbReference type="GO" id="GO:0001649">
    <property type="term" value="P:osteoblast differentiation"/>
    <property type="evidence" value="ECO:0000266"/>
    <property type="project" value="RGD"/>
</dbReference>
<dbReference type="GO" id="GO:0042104">
    <property type="term" value="P:positive regulation of activated T cell proliferation"/>
    <property type="evidence" value="ECO:0000266"/>
    <property type="project" value="RGD"/>
</dbReference>
<dbReference type="GO" id="GO:0045766">
    <property type="term" value="P:positive regulation of angiogenesis"/>
    <property type="evidence" value="ECO:0000316"/>
    <property type="project" value="BHF-UCL"/>
</dbReference>
<dbReference type="GO" id="GO:0043536">
    <property type="term" value="P:positive regulation of blood vessel endothelial cell migration"/>
    <property type="evidence" value="ECO:0000316"/>
    <property type="project" value="BHF-UCL"/>
</dbReference>
<dbReference type="GO" id="GO:0051781">
    <property type="term" value="P:positive regulation of cell division"/>
    <property type="evidence" value="ECO:0007669"/>
    <property type="project" value="UniProtKB-KW"/>
</dbReference>
<dbReference type="GO" id="GO:0008284">
    <property type="term" value="P:positive regulation of cell population proliferation"/>
    <property type="evidence" value="ECO:0000250"/>
    <property type="project" value="UniProtKB"/>
</dbReference>
<dbReference type="GO" id="GO:0045725">
    <property type="term" value="P:positive regulation of glycogen biosynthetic process"/>
    <property type="evidence" value="ECO:0000266"/>
    <property type="project" value="RGD"/>
</dbReference>
<dbReference type="GO" id="GO:0046628">
    <property type="term" value="P:positive regulation of insulin receptor signaling pathway"/>
    <property type="evidence" value="ECO:0000266"/>
    <property type="project" value="RGD"/>
</dbReference>
<dbReference type="GO" id="GO:0043410">
    <property type="term" value="P:positive regulation of MAPK cascade"/>
    <property type="evidence" value="ECO:0000266"/>
    <property type="project" value="RGD"/>
</dbReference>
<dbReference type="GO" id="GO:0045840">
    <property type="term" value="P:positive regulation of mitotic nuclear division"/>
    <property type="evidence" value="ECO:0000266"/>
    <property type="project" value="RGD"/>
</dbReference>
<dbReference type="GO" id="GO:0040018">
    <property type="term" value="P:positive regulation of multicellular organism growth"/>
    <property type="evidence" value="ECO:0000266"/>
    <property type="project" value="RGD"/>
</dbReference>
<dbReference type="GO" id="GO:0046622">
    <property type="term" value="P:positive regulation of organ growth"/>
    <property type="evidence" value="ECO:0000266"/>
    <property type="project" value="RGD"/>
</dbReference>
<dbReference type="GO" id="GO:0051897">
    <property type="term" value="P:positive regulation of phosphatidylinositol 3-kinase/protein kinase B signal transduction"/>
    <property type="evidence" value="ECO:0000266"/>
    <property type="project" value="RGD"/>
</dbReference>
<dbReference type="GO" id="GO:0048633">
    <property type="term" value="P:positive regulation of skeletal muscle tissue growth"/>
    <property type="evidence" value="ECO:0000266"/>
    <property type="project" value="RGD"/>
</dbReference>
<dbReference type="GO" id="GO:0090031">
    <property type="term" value="P:positive regulation of steroid hormone biosynthetic process"/>
    <property type="evidence" value="ECO:0000314"/>
    <property type="project" value="BHF-UCL"/>
</dbReference>
<dbReference type="GO" id="GO:0045944">
    <property type="term" value="P:positive regulation of transcription by RNA polymerase II"/>
    <property type="evidence" value="ECO:0000266"/>
    <property type="project" value="RGD"/>
</dbReference>
<dbReference type="GO" id="GO:1905564">
    <property type="term" value="P:positive regulation of vascular endothelial cell proliferation"/>
    <property type="evidence" value="ECO:0000316"/>
    <property type="project" value="BHF-UCL"/>
</dbReference>
<dbReference type="GO" id="GO:0051147">
    <property type="term" value="P:regulation of muscle cell differentiation"/>
    <property type="evidence" value="ECO:0000250"/>
    <property type="project" value="UniProtKB"/>
</dbReference>
<dbReference type="GO" id="GO:1904612">
    <property type="term" value="P:response to 2,3,7,8-tetrachlorodibenzodioxine"/>
    <property type="evidence" value="ECO:0000314"/>
    <property type="project" value="RGD"/>
</dbReference>
<dbReference type="GO" id="GO:0032355">
    <property type="term" value="P:response to estradiol"/>
    <property type="evidence" value="ECO:0000270"/>
    <property type="project" value="RGD"/>
</dbReference>
<dbReference type="GO" id="GO:0045471">
    <property type="term" value="P:response to ethanol"/>
    <property type="evidence" value="ECO:0000270"/>
    <property type="project" value="RGD"/>
</dbReference>
<dbReference type="GO" id="GO:0035094">
    <property type="term" value="P:response to nicotine"/>
    <property type="evidence" value="ECO:0000314"/>
    <property type="project" value="RGD"/>
</dbReference>
<dbReference type="GO" id="GO:0031667">
    <property type="term" value="P:response to nutrient levels"/>
    <property type="evidence" value="ECO:0000270"/>
    <property type="project" value="RGD"/>
</dbReference>
<dbReference type="GO" id="GO:0009410">
    <property type="term" value="P:response to xenobiotic stimulus"/>
    <property type="evidence" value="ECO:0000314"/>
    <property type="project" value="RGD"/>
</dbReference>
<dbReference type="GO" id="GO:0060720">
    <property type="term" value="P:spongiotrophoblast cell proliferation"/>
    <property type="evidence" value="ECO:0000266"/>
    <property type="project" value="RGD"/>
</dbReference>
<dbReference type="GO" id="GO:0051146">
    <property type="term" value="P:striated muscle cell differentiation"/>
    <property type="evidence" value="ECO:0000266"/>
    <property type="project" value="RGD"/>
</dbReference>
<dbReference type="CDD" id="cd04368">
    <property type="entry name" value="IlGF"/>
    <property type="match status" value="1"/>
</dbReference>
<dbReference type="FunFam" id="1.10.100.10:FF:000002">
    <property type="entry name" value="Insulin-like growth factor II preproprotein"/>
    <property type="match status" value="1"/>
</dbReference>
<dbReference type="Gene3D" id="1.10.100.10">
    <property type="entry name" value="Insulin-like"/>
    <property type="match status" value="1"/>
</dbReference>
<dbReference type="InterPro" id="IPR022334">
    <property type="entry name" value="IGF2"/>
</dbReference>
<dbReference type="InterPro" id="IPR013576">
    <property type="entry name" value="IGF2_C"/>
</dbReference>
<dbReference type="InterPro" id="IPR016179">
    <property type="entry name" value="Insulin-like"/>
</dbReference>
<dbReference type="InterPro" id="IPR022350">
    <property type="entry name" value="Insulin-like_growth_factor"/>
</dbReference>
<dbReference type="InterPro" id="IPR036438">
    <property type="entry name" value="Insulin-like_sf"/>
</dbReference>
<dbReference type="InterPro" id="IPR022353">
    <property type="entry name" value="Insulin_CS"/>
</dbReference>
<dbReference type="InterPro" id="IPR022352">
    <property type="entry name" value="Insulin_family"/>
</dbReference>
<dbReference type="PANTHER" id="PTHR46886">
    <property type="entry name" value="INSULIN-LIKE GROWTH FACTOR II"/>
    <property type="match status" value="1"/>
</dbReference>
<dbReference type="PANTHER" id="PTHR46886:SF1">
    <property type="entry name" value="INSULIN-LIKE GROWTH FACTOR II"/>
    <property type="match status" value="1"/>
</dbReference>
<dbReference type="Pfam" id="PF08365">
    <property type="entry name" value="IGF2_C"/>
    <property type="match status" value="1"/>
</dbReference>
<dbReference type="Pfam" id="PF00049">
    <property type="entry name" value="Insulin"/>
    <property type="match status" value="2"/>
</dbReference>
<dbReference type="PRINTS" id="PR02002">
    <property type="entry name" value="INSLNLIKEGF"/>
</dbReference>
<dbReference type="PRINTS" id="PR02006">
    <property type="entry name" value="INSLNLIKEGF2"/>
</dbReference>
<dbReference type="PRINTS" id="PR00276">
    <property type="entry name" value="INSULINFAMLY"/>
</dbReference>
<dbReference type="SMART" id="SM00078">
    <property type="entry name" value="IlGF"/>
    <property type="match status" value="1"/>
</dbReference>
<dbReference type="SUPFAM" id="SSF56994">
    <property type="entry name" value="Insulin-like"/>
    <property type="match status" value="1"/>
</dbReference>
<dbReference type="PROSITE" id="PS00262">
    <property type="entry name" value="INSULIN"/>
    <property type="match status" value="1"/>
</dbReference>
<reference key="1">
    <citation type="journal article" date="1984" name="Nature">
        <title>Insulin-like growth factor II precursor gene organization in relation to insulin gene family.</title>
        <authorList>
            <person name="Dull T.J."/>
            <person name="Gray A."/>
            <person name="Hayflick J.S."/>
            <person name="Ullrich A."/>
        </authorList>
    </citation>
    <scope>NUCLEOTIDE SEQUENCE [MRNA]</scope>
    <source>
        <strain>BRL-3A</strain>
    </source>
</reference>
<reference key="2">
    <citation type="journal article" date="1985" name="Nucleic Acids Res.">
        <title>Developmental and tissue-specific expression of a family of transcripts related to rat insulin-like growth factor II mRNA.</title>
        <authorList>
            <person name="Soares M.B."/>
            <person name="Ishii D.N."/>
            <person name="Efstratiadis A."/>
        </authorList>
    </citation>
    <scope>NUCLEOTIDE SEQUENCE [MRNA]</scope>
    <source>
        <strain>Buffalo</strain>
    </source>
</reference>
<reference key="3">
    <citation type="journal article" date="1986" name="J. Mol. Biol.">
        <title>Rat insulin-like growth factor II gene. A single gene with two promoters expressing a multitranscript family.</title>
        <authorList>
            <person name="Soares M.B."/>
            <person name="Turken A."/>
            <person name="Ishii D.N."/>
            <person name="Mills L."/>
            <person name="Episkopou V."/>
            <person name="Cotter S."/>
            <person name="Zeitlin S."/>
            <person name="Efstratiadis A."/>
        </authorList>
    </citation>
    <scope>NUCLEOTIDE SEQUENCE [GENOMIC DNA]</scope>
</reference>
<reference key="4">
    <citation type="journal article" date="1986" name="J. Biol. Chem.">
        <title>Structure and expression of the rat insulin-like growth factor II (rIGF-II) gene. rIGF-II RNAs are transcribed from two promoters.</title>
        <authorList>
            <person name="Frunzio R."/>
            <person name="Chiariotti L."/>
            <person name="Brown A.L."/>
            <person name="Graham D.E."/>
            <person name="Rechler M.M."/>
            <person name="Bruni C.B."/>
        </authorList>
    </citation>
    <scope>NUCLEOTIDE SEQUENCE [GENOMIC DNA]</scope>
</reference>
<reference key="5">
    <citation type="journal article" date="1988" name="Biochim. Biophys. Acta">
        <title>Transcriptional deviation of the rat insulin-like growth factor II gene initiated at three alternative leader-exons between neonatal tissues and ascites hepatomas.</title>
        <authorList>
            <person name="Ueno T."/>
            <person name="Takahashi K."/>
            <person name="Matsuguchi T."/>
            <person name="Endo H."/>
            <person name="Yamamoto M."/>
        </authorList>
    </citation>
    <scope>NUCLEOTIDE SEQUENCE [MRNA]</scope>
</reference>
<reference key="6">
    <citation type="journal article" date="1984" name="Nature">
        <title>Isolation of a cDNA clone encoding rat insulin-like growth factor-II precursor.</title>
        <authorList>
            <person name="Whitfield H.J."/>
            <person name="Bruni C.B."/>
            <person name="Frunzio R."/>
            <person name="Terrell J.E."/>
            <person name="Nissley S.P."/>
            <person name="Rechler M.M."/>
        </authorList>
    </citation>
    <scope>NUCLEOTIDE SEQUENCE OF 62-180</scope>
</reference>
<reference key="7">
    <citation type="journal article" date="1988" name="Mol. Endocrinol.">
        <title>Structure of the rat insulin-like growth factor II transcriptional unit: heterogeneous transcripts are generated from two promoters by use of multiple polyadenylation sites and differential ribonucleic acid splicing.</title>
        <authorList>
            <person name="Chiariotti L."/>
            <person name="Brown A.L."/>
            <person name="Frunzio R."/>
            <person name="Clemmons D.R."/>
            <person name="Rechler M.M."/>
            <person name="Bruni C.B."/>
        </authorList>
    </citation>
    <scope>NUCLEOTIDE SEQUENCE OF 103-180</scope>
</reference>
<reference key="8">
    <citation type="journal article" date="1981" name="J. Biol. Chem.">
        <title>Purification and primary structure of a polypeptide with multiplication-stimulating activity from rat liver cell cultures. Homology with human insulin-like growth factor II.</title>
        <authorList>
            <person name="Marquardt H."/>
            <person name="Todaro G.J."/>
            <person name="Henderson L.E."/>
            <person name="Oroszlan S."/>
        </authorList>
    </citation>
    <scope>PROTEIN SEQUENCE OF 25-91</scope>
</reference>
<reference key="9">
    <citation type="journal article" date="2007" name="Am. J. Physiol.">
        <title>Preptin, another peptide product of the pancreatic beta-cell, is osteogenic in vitro and in vivo.</title>
        <authorList>
            <person name="Cornish J."/>
            <person name="Callon K.E."/>
            <person name="Bava U."/>
            <person name="Watson M."/>
            <person name="Xu X."/>
            <person name="Lin J.M."/>
            <person name="Chan V.A."/>
            <person name="Grey A.B."/>
            <person name="Naot D."/>
            <person name="Buchanan C.M."/>
            <person name="Cooper G.J."/>
            <person name="Reid I.R."/>
        </authorList>
    </citation>
    <scope>OSTEOGENIC FUNCTION OF PREPTIN</scope>
</reference>
<accession>P01346</accession>
<gene>
    <name evidence="2" type="primary">Igf2</name>
    <name evidence="8" type="synonym">Igf-2</name>
</gene>
<sequence>MGIPVGKSMLVLLISLAFALCCIAAYRPSETLCGGELVDTLQFVCSDRGFYFSRPSSRANRRSRGIVEECCFRSCDLALLETYCATPAKSERDVSTSQAVLPDDFPRYPVGKFFKFDTWRQSAGRLRRGLPALLRARRGRMLAKELEAFREAKRHRPLIVLPPKDPAHGGASSEMSSNHQ</sequence>
<organism>
    <name type="scientific">Rattus norvegicus</name>
    <name type="common">Rat</name>
    <dbReference type="NCBI Taxonomy" id="10116"/>
    <lineage>
        <taxon>Eukaryota</taxon>
        <taxon>Metazoa</taxon>
        <taxon>Chordata</taxon>
        <taxon>Craniata</taxon>
        <taxon>Vertebrata</taxon>
        <taxon>Euteleostomi</taxon>
        <taxon>Mammalia</taxon>
        <taxon>Eutheria</taxon>
        <taxon>Euarchontoglires</taxon>
        <taxon>Glires</taxon>
        <taxon>Rodentia</taxon>
        <taxon>Myomorpha</taxon>
        <taxon>Muroidea</taxon>
        <taxon>Muridae</taxon>
        <taxon>Murinae</taxon>
        <taxon>Rattus</taxon>
    </lineage>
</organism>